<accession>A0A182BSS4</accession>
<name>RLR61_PLAVT</name>
<gene>
    <name evidence="4 5" type="primary">RxLR61</name>
</gene>
<proteinExistence type="evidence at transcript level"/>
<evidence type="ECO:0000255" key="1"/>
<evidence type="ECO:0000269" key="2">
    <source>
    </source>
</evidence>
<evidence type="ECO:0000269" key="3">
    <source>
    </source>
</evidence>
<evidence type="ECO:0000303" key="4">
    <source>
    </source>
</evidence>
<evidence type="ECO:0000303" key="5">
    <source>
    </source>
</evidence>
<evidence type="ECO:0000305" key="6"/>
<evidence type="ECO:0000305" key="7">
    <source>
    </source>
</evidence>
<comment type="function">
    <text evidence="2 3">Effector that partially suppresses the tobacco programmed cell death induced by cell death-inducing proteins.</text>
</comment>
<comment type="subcellular location">
    <subcellularLocation>
        <location evidence="2 3">Secreted</location>
    </subcellularLocation>
    <subcellularLocation>
        <location evidence="3">Host chloroplast envelope</location>
    </subcellularLocation>
    <subcellularLocation>
        <location evidence="2">Host cytoplasm</location>
    </subcellularLocation>
    <subcellularLocation>
        <location evidence="2 3">Host nucleus</location>
    </subcellularLocation>
</comment>
<comment type="induction">
    <text evidence="2">Expression is up-regulated at the earlier infection stages.</text>
</comment>
<comment type="domain">
    <text evidence="7">The RxLR-dEER motif acts to carry the protein into the host cell cytoplasm through binding to cell surface phosphatidylinositol-3-phosphate.</text>
</comment>
<comment type="similarity">
    <text evidence="6">Belongs to the RxLR effector family.</text>
</comment>
<organism>
    <name type="scientific">Plasmopara viticola</name>
    <name type="common">Downy mildew of grapevine</name>
    <name type="synonym">Botrytis viticola</name>
    <dbReference type="NCBI Taxonomy" id="143451"/>
    <lineage>
        <taxon>Eukaryota</taxon>
        <taxon>Sar</taxon>
        <taxon>Stramenopiles</taxon>
        <taxon>Oomycota</taxon>
        <taxon>Peronosporales</taxon>
        <taxon>Peronosporaceae</taxon>
        <taxon>Plasmopara</taxon>
    </lineage>
</organism>
<protein>
    <recommendedName>
        <fullName evidence="4">Secreted RxLR effector protein 61</fullName>
    </recommendedName>
</protein>
<reference key="1">
    <citation type="journal article" date="2016" name="Front. Microbiol.">
        <title>Studying the mechanism of Plasmopara viticola RxLR effectors on suppressing plant immunity.</title>
        <authorList>
            <person name="Xiang J."/>
            <person name="Li X."/>
            <person name="Wu J."/>
            <person name="Yin L."/>
            <person name="Zhang Y."/>
            <person name="Lu J."/>
        </authorList>
    </citation>
    <scope>NUCLEOTIDE SEQUENCE [MRNA]</scope>
    <scope>INDUCTION</scope>
    <scope>FUNCTION</scope>
    <scope>SUBCELLULAR LOCATION</scope>
    <scope>DOMAIN</scope>
    <source>
        <strain>ZJ-1-1</strain>
    </source>
</reference>
<reference key="2">
    <citation type="journal article" date="2018" name="Front. Plant Sci.">
        <title>In planta functional analysis and subcellular localization of the oomycete pathogen Plasmopara viticola candidate RXLR effector repertoire.</title>
        <authorList>
            <person name="Liu Y."/>
            <person name="Lan X."/>
            <person name="Song S."/>
            <person name="Yin L."/>
            <person name="Dry I.B."/>
            <person name="Qu J."/>
            <person name="Xiang J."/>
            <person name="Lu J."/>
        </authorList>
    </citation>
    <scope>NUCLEOTIDE SEQUENCE [MRNA]</scope>
    <scope>DOMAIN</scope>
    <scope>FUNCTION</scope>
    <scope>SUBCELLULAR LOCATION</scope>
</reference>
<feature type="signal peptide" evidence="1">
    <location>
        <begin position="1"/>
        <end position="22"/>
    </location>
</feature>
<feature type="chain" id="PRO_5008116101" description="Secreted RxLR effector protein 61">
    <location>
        <begin position="23"/>
        <end position="102"/>
    </location>
</feature>
<feature type="short sequence motif" description="RxLR-dEER" evidence="7">
    <location>
        <begin position="51"/>
        <end position="60"/>
    </location>
</feature>
<sequence length="102" mass="12219">MAFQLRIVQHLLHITFLRLPLAYPSQIHQRENERMFLLRIHRQDVQHLSHRRLRQLNEHRSLLPKGFPFKLLRPLPQLQRLLSQVCRGSVRIDACCCIPSCH</sequence>
<dbReference type="EMBL" id="KX010963">
    <property type="protein sequence ID" value="ANC73383.1"/>
    <property type="molecule type" value="mRNA"/>
</dbReference>
<dbReference type="SMR" id="A0A182BSS4"/>
<dbReference type="GO" id="GO:0005576">
    <property type="term" value="C:extracellular region"/>
    <property type="evidence" value="ECO:0007669"/>
    <property type="project" value="UniProtKB-SubCell"/>
</dbReference>
<dbReference type="GO" id="GO:0030430">
    <property type="term" value="C:host cell cytoplasm"/>
    <property type="evidence" value="ECO:0007669"/>
    <property type="project" value="UniProtKB-SubCell"/>
</dbReference>
<dbReference type="GO" id="GO:0042025">
    <property type="term" value="C:host cell nucleus"/>
    <property type="evidence" value="ECO:0007669"/>
    <property type="project" value="UniProtKB-SubCell"/>
</dbReference>
<keyword id="KW-1035">Host cytoplasm</keyword>
<keyword id="KW-1048">Host nucleus</keyword>
<keyword id="KW-0964">Secreted</keyword>
<keyword id="KW-0732">Signal</keyword>
<keyword id="KW-0843">Virulence</keyword>